<reference key="1">
    <citation type="journal article" date="1991" name="Genomics">
        <title>Rat hypoxanthine phosphoribosyltransferase cDNA cloning and sequence analysis.</title>
        <authorList>
            <person name="Chiaverotti T.A."/>
            <person name="Battula N."/>
            <person name="Monnat R.J. Jr."/>
        </authorList>
    </citation>
    <scope>NUCLEOTIDE SEQUENCE [MRNA]</scope>
</reference>
<reference key="2">
    <citation type="journal article" date="1991" name="Adv. Exp. Med. Biol.">
        <title>Rat hypoxanthine phosphoribosyltransferase cDNA cloning and sequence analysis.</title>
        <authorList>
            <person name="Chiaverotti T.A."/>
            <person name="Battula N."/>
            <person name="Monnat R.J. Jr."/>
        </authorList>
    </citation>
    <scope>NUCLEOTIDE SEQUENCE [MRNA]</scope>
</reference>
<reference key="3">
    <citation type="journal article" date="1992" name="Mutat. Res.">
        <title>The gene encoding hypoxanthine-guanine phosphoribosyltransferase as target for mutational analysis: PCR cloning and sequencing of the cDNA from the rat.</title>
        <authorList>
            <person name="Jansen J.G."/>
            <person name="Vrieling H."/>
            <person name="van Zeeland A.A."/>
            <person name="Mohn G.R."/>
        </authorList>
    </citation>
    <scope>NUCLEOTIDE SEQUENCE [MRNA]</scope>
</reference>
<reference key="4">
    <citation type="journal article" date="1998" name="Mutat. Res.">
        <title>DNA sequence flanking the protein coding regions of the rat Hprt gene.</title>
        <authorList>
            <person name="Chen T."/>
            <person name="Mittelstaedt R.A."/>
            <person name="Heflich R.H."/>
        </authorList>
    </citation>
    <scope>NUCLEOTIDE SEQUENCE [GENOMIC DNA]</scope>
    <source>
        <strain>Fischer 344</strain>
        <tissue>Spleen</tissue>
    </source>
</reference>
<reference key="5">
    <citation type="journal article" date="2004" name="Genome Res.">
        <title>The status, quality, and expansion of the NIH full-length cDNA project: the Mammalian Gene Collection (MGC).</title>
        <authorList>
            <consortium name="The MGC Project Team"/>
        </authorList>
    </citation>
    <scope>NUCLEOTIDE SEQUENCE [LARGE SCALE MRNA]</scope>
    <source>
        <tissue>Thymus</tissue>
    </source>
</reference>
<reference key="6">
    <citation type="submission" date="2007-09" db="UniProtKB">
        <authorList>
            <person name="Lubec G."/>
            <person name="Afjehi-Sadat L."/>
            <person name="Chen W.-Q."/>
            <person name="Kang S.U."/>
            <person name="Lubec S."/>
        </authorList>
    </citation>
    <scope>PROTEIN SEQUENCE OF 35-45; 74-83; 92-101; 116-141; 157-166 AND 171-200</scope>
    <scope>IDENTIFICATION BY MASS SPECTROMETRY</scope>
    <source>
        <strain>Sprague-Dawley</strain>
        <tissue>Brain</tissue>
        <tissue>Hippocampus</tissue>
        <tissue>Spinal cord</tissue>
    </source>
</reference>
<reference key="7">
    <citation type="journal article" date="1994" name="Mutat. Res.">
        <title>Analysis of in vivo mutation in exon 8 of the rat hprt gene.</title>
        <authorList>
            <person name="Mittelstaedt R.A."/>
            <person name="Heflich R.H."/>
        </authorList>
    </citation>
    <scope>NUCLEOTIDE SEQUENCE [GENOMIC DNA] OF 163-203</scope>
    <source>
        <strain>Sprague-Dawley</strain>
    </source>
</reference>
<reference key="8">
    <citation type="journal article" date="2012" name="Nat. Commun.">
        <title>Quantitative maps of protein phosphorylation sites across 14 different rat organs and tissues.</title>
        <authorList>
            <person name="Lundby A."/>
            <person name="Secher A."/>
            <person name="Lage K."/>
            <person name="Nordsborg N.B."/>
            <person name="Dmytriyev A."/>
            <person name="Lundby C."/>
            <person name="Olsen J.V."/>
        </authorList>
    </citation>
    <scope>PHOSPHORYLATION [LARGE SCALE ANALYSIS] AT THR-142</scope>
    <scope>IDENTIFICATION BY MASS SPECTROMETRY [LARGE SCALE ANALYSIS]</scope>
</reference>
<comment type="function">
    <text evidence="1">Converts guanine to guanosine monophosphate, and hypoxanthine to inosine monophosphate. Transfers the 5-phosphoribosyl group from 5-phosphoribosylpyrophosphate onto the purine. Plays a central role in the generation of purine nucleotides through the purine salvage pathway (By similarity).</text>
</comment>
<comment type="catalytic activity">
    <reaction evidence="2">
        <text>IMP + diphosphate = hypoxanthine + 5-phospho-alpha-D-ribose 1-diphosphate</text>
        <dbReference type="Rhea" id="RHEA:17973"/>
        <dbReference type="ChEBI" id="CHEBI:17368"/>
        <dbReference type="ChEBI" id="CHEBI:33019"/>
        <dbReference type="ChEBI" id="CHEBI:58017"/>
        <dbReference type="ChEBI" id="CHEBI:58053"/>
        <dbReference type="EC" id="2.4.2.8"/>
    </reaction>
    <physiologicalReaction direction="right-to-left" evidence="2">
        <dbReference type="Rhea" id="RHEA:17975"/>
    </physiologicalReaction>
</comment>
<comment type="catalytic activity">
    <reaction evidence="2">
        <text>GMP + diphosphate = guanine + 5-phospho-alpha-D-ribose 1-diphosphate</text>
        <dbReference type="Rhea" id="RHEA:25424"/>
        <dbReference type="ChEBI" id="CHEBI:16235"/>
        <dbReference type="ChEBI" id="CHEBI:33019"/>
        <dbReference type="ChEBI" id="CHEBI:58017"/>
        <dbReference type="ChEBI" id="CHEBI:58115"/>
        <dbReference type="EC" id="2.4.2.8"/>
    </reaction>
    <physiologicalReaction direction="right-to-left" evidence="2">
        <dbReference type="Rhea" id="RHEA:25426"/>
    </physiologicalReaction>
</comment>
<comment type="cofactor">
    <cofactor evidence="1">
        <name>Mg(2+)</name>
        <dbReference type="ChEBI" id="CHEBI:18420"/>
    </cofactor>
    <text evidence="1">Binds 2 magnesium ions per subunit. The magnesium ions are essentially bound to the substrate and have few direct interactions with the protein.</text>
</comment>
<comment type="pathway">
    <text>Purine metabolism; IMP biosynthesis via salvage pathway; IMP from hypoxanthine: step 1/1.</text>
</comment>
<comment type="subunit">
    <text evidence="1">Homotetramer.</text>
</comment>
<comment type="subcellular location">
    <subcellularLocation>
        <location>Cytoplasm</location>
    </subcellularLocation>
</comment>
<comment type="similarity">
    <text evidence="4">Belongs to the purine/pyrimidine phosphoribosyltransferase family.</text>
</comment>
<proteinExistence type="evidence at protein level"/>
<feature type="chain" id="PRO_0000139591" description="Hypoxanthine-guanine phosphoribosyltransferase">
    <location>
        <begin position="1"/>
        <end position="218"/>
    </location>
</feature>
<feature type="active site" description="Proton acceptor" evidence="1">
    <location>
        <position position="138"/>
    </location>
</feature>
<feature type="binding site" evidence="1">
    <location>
        <position position="69"/>
    </location>
    <ligand>
        <name>GMP</name>
        <dbReference type="ChEBI" id="CHEBI:58115"/>
    </ligand>
</feature>
<feature type="binding site" evidence="1">
    <location>
        <begin position="134"/>
        <end position="142"/>
    </location>
    <ligand>
        <name>GMP</name>
        <dbReference type="ChEBI" id="CHEBI:58115"/>
    </ligand>
</feature>
<feature type="binding site" evidence="1">
    <location>
        <position position="166"/>
    </location>
    <ligand>
        <name>GMP</name>
        <dbReference type="ChEBI" id="CHEBI:58115"/>
    </ligand>
</feature>
<feature type="binding site" evidence="1">
    <location>
        <begin position="186"/>
        <end position="188"/>
    </location>
    <ligand>
        <name>GMP</name>
        <dbReference type="ChEBI" id="CHEBI:58115"/>
    </ligand>
</feature>
<feature type="binding site" evidence="1">
    <location>
        <position position="194"/>
    </location>
    <ligand>
        <name>GMP</name>
        <dbReference type="ChEBI" id="CHEBI:58115"/>
    </ligand>
</feature>
<feature type="binding site" evidence="1">
    <location>
        <position position="194"/>
    </location>
    <ligand>
        <name>Mg(2+)</name>
        <dbReference type="ChEBI" id="CHEBI:18420"/>
    </ligand>
</feature>
<feature type="modified residue" description="N6-acetyllysine" evidence="3">
    <location>
        <position position="103"/>
    </location>
</feature>
<feature type="modified residue" description="Phosphothreonine" evidence="5">
    <location>
        <position position="142"/>
    </location>
</feature>
<feature type="cross-link" description="Glycyl lysine isopeptide (Lys-Gly) (interchain with G-Cter in SUMO1); alternate" evidence="2">
    <location>
        <position position="115"/>
    </location>
</feature>
<feature type="cross-link" description="Glycyl lysine isopeptide (Lys-Gly) (interchain with G-Cter in SUMO2); alternate" evidence="2">
    <location>
        <position position="115"/>
    </location>
</feature>
<accession>P27605</accession>
<accession>P70469</accession>
<accession>Q4KMC5</accession>
<accession>Q62926</accession>
<sequence>MSTLSPSVVISDDEPGYDLDLFCIPNHYAEDLEKVFIPHGLIMDRTERLARDVMKEMGGHHIVALCVLKGGYKFFADLLDYIKALNRNSDRSIPMTVDFIRLKSYCNDQSTGDIKVIGGDDLSTLTGKNVLIVEDIIDTGKTMQTLLSLVKQYSPKMVKVASLLVKRTSRSVGYRPDFVGFEIPDKFVVGYALDYNEHFRDLNHVCVISESGKAKYKA</sequence>
<keyword id="KW-0007">Acetylation</keyword>
<keyword id="KW-0963">Cytoplasm</keyword>
<keyword id="KW-0903">Direct protein sequencing</keyword>
<keyword id="KW-0328">Glycosyltransferase</keyword>
<keyword id="KW-1017">Isopeptide bond</keyword>
<keyword id="KW-0460">Magnesium</keyword>
<keyword id="KW-0479">Metal-binding</keyword>
<keyword id="KW-0547">Nucleotide-binding</keyword>
<keyword id="KW-0597">Phosphoprotein</keyword>
<keyword id="KW-0660">Purine salvage</keyword>
<keyword id="KW-1185">Reference proteome</keyword>
<keyword id="KW-0808">Transferase</keyword>
<keyword id="KW-0832">Ubl conjugation</keyword>
<protein>
    <recommendedName>
        <fullName>Hypoxanthine-guanine phosphoribosyltransferase</fullName>
        <shortName>HGPRT</shortName>
        <shortName>HGPRTase</shortName>
        <ecNumber evidence="2">2.4.2.8</ecNumber>
    </recommendedName>
</protein>
<organism>
    <name type="scientific">Rattus norvegicus</name>
    <name type="common">Rat</name>
    <dbReference type="NCBI Taxonomy" id="10116"/>
    <lineage>
        <taxon>Eukaryota</taxon>
        <taxon>Metazoa</taxon>
        <taxon>Chordata</taxon>
        <taxon>Craniata</taxon>
        <taxon>Vertebrata</taxon>
        <taxon>Euteleostomi</taxon>
        <taxon>Mammalia</taxon>
        <taxon>Eutheria</taxon>
        <taxon>Euarchontoglires</taxon>
        <taxon>Glires</taxon>
        <taxon>Rodentia</taxon>
        <taxon>Myomorpha</taxon>
        <taxon>Muroidea</taxon>
        <taxon>Muridae</taxon>
        <taxon>Murinae</taxon>
        <taxon>Rattus</taxon>
    </lineage>
</organism>
<name>HPRT_RAT</name>
<gene>
    <name type="primary">Hprt1</name>
    <name type="synonym">Hprt</name>
</gene>
<evidence type="ECO:0000250" key="1"/>
<evidence type="ECO:0000250" key="2">
    <source>
        <dbReference type="UniProtKB" id="P00492"/>
    </source>
</evidence>
<evidence type="ECO:0000250" key="3">
    <source>
        <dbReference type="UniProtKB" id="P00493"/>
    </source>
</evidence>
<evidence type="ECO:0000305" key="4"/>
<evidence type="ECO:0007744" key="5">
    <source>
    </source>
</evidence>
<dbReference type="EC" id="2.4.2.8" evidence="2"/>
<dbReference type="EMBL" id="M63983">
    <property type="protein sequence ID" value="AAA41350.1"/>
    <property type="molecule type" value="mRNA"/>
</dbReference>
<dbReference type="EMBL" id="S79292">
    <property type="protein sequence ID" value="AAB21288.1"/>
    <property type="molecule type" value="mRNA"/>
</dbReference>
<dbReference type="EMBL" id="X62085">
    <property type="protein sequence ID" value="CAA43997.1"/>
    <property type="molecule type" value="mRNA"/>
</dbReference>
<dbReference type="EMBL" id="AF001282">
    <property type="protein sequence ID" value="AAB65640.1"/>
    <property type="molecule type" value="Genomic_DNA"/>
</dbReference>
<dbReference type="EMBL" id="AF001278">
    <property type="protein sequence ID" value="AAB65640.1"/>
    <property type="status" value="JOINED"/>
    <property type="molecule type" value="Genomic_DNA"/>
</dbReference>
<dbReference type="EMBL" id="AF009655">
    <property type="protein sequence ID" value="AAB65640.1"/>
    <property type="status" value="JOINED"/>
    <property type="molecule type" value="Genomic_DNA"/>
</dbReference>
<dbReference type="EMBL" id="AF009656">
    <property type="protein sequence ID" value="AAB65640.1"/>
    <property type="status" value="JOINED"/>
    <property type="molecule type" value="Genomic_DNA"/>
</dbReference>
<dbReference type="EMBL" id="AF001279">
    <property type="protein sequence ID" value="AAB65640.1"/>
    <property type="status" value="JOINED"/>
    <property type="molecule type" value="Genomic_DNA"/>
</dbReference>
<dbReference type="EMBL" id="AF001280">
    <property type="protein sequence ID" value="AAB65640.1"/>
    <property type="status" value="JOINED"/>
    <property type="molecule type" value="Genomic_DNA"/>
</dbReference>
<dbReference type="EMBL" id="AF001281">
    <property type="protein sequence ID" value="AAB65640.1"/>
    <property type="status" value="JOINED"/>
    <property type="molecule type" value="Genomic_DNA"/>
</dbReference>
<dbReference type="EMBL" id="BC098629">
    <property type="protein sequence ID" value="AAH98629.1"/>
    <property type="molecule type" value="mRNA"/>
</dbReference>
<dbReference type="EMBL" id="U06049">
    <property type="protein sequence ID" value="AAA56887.1"/>
    <property type="molecule type" value="Genomic_DNA"/>
</dbReference>
<dbReference type="PIR" id="S18140">
    <property type="entry name" value="S18140"/>
</dbReference>
<dbReference type="RefSeq" id="NP_036715.1">
    <property type="nucleotide sequence ID" value="NM_012583.2"/>
</dbReference>
<dbReference type="RefSeq" id="XP_008771881.1">
    <property type="nucleotide sequence ID" value="XM_008773659.2"/>
</dbReference>
<dbReference type="SMR" id="P27605"/>
<dbReference type="BioGRID" id="246627">
    <property type="interactions" value="1"/>
</dbReference>
<dbReference type="FunCoup" id="P27605">
    <property type="interactions" value="1103"/>
</dbReference>
<dbReference type="IntAct" id="P27605">
    <property type="interactions" value="2"/>
</dbReference>
<dbReference type="STRING" id="10116.ENSRNOP00000043388"/>
<dbReference type="iPTMnet" id="P27605"/>
<dbReference type="PhosphoSitePlus" id="P27605"/>
<dbReference type="SwissPalm" id="P27605"/>
<dbReference type="jPOST" id="P27605"/>
<dbReference type="PaxDb" id="10116-ENSRNOP00000043388"/>
<dbReference type="Ensembl" id="ENSRNOT00000109953.1">
    <property type="protein sequence ID" value="ENSRNOP00000082017.1"/>
    <property type="gene ID" value="ENSRNOG00000031367.5"/>
</dbReference>
<dbReference type="GeneID" id="24465"/>
<dbReference type="KEGG" id="rno:24465"/>
<dbReference type="AGR" id="RGD:2826"/>
<dbReference type="CTD" id="3251"/>
<dbReference type="RGD" id="2826">
    <property type="gene designation" value="Hprt1"/>
</dbReference>
<dbReference type="eggNOG" id="KOG3367">
    <property type="taxonomic scope" value="Eukaryota"/>
</dbReference>
<dbReference type="GeneTree" id="ENSGT00940000155028"/>
<dbReference type="HOGENOM" id="CLU_073615_3_0_1"/>
<dbReference type="InParanoid" id="P27605"/>
<dbReference type="OrthoDB" id="6639at9989"/>
<dbReference type="PhylomeDB" id="P27605"/>
<dbReference type="TreeFam" id="TF313367"/>
<dbReference type="Reactome" id="R-RNO-74217">
    <property type="pathway name" value="Purine salvage"/>
</dbReference>
<dbReference type="Reactome" id="R-RNO-9748787">
    <property type="pathway name" value="Azathioprine ADME"/>
</dbReference>
<dbReference type="SABIO-RK" id="P27605"/>
<dbReference type="UniPathway" id="UPA00591">
    <property type="reaction ID" value="UER00648"/>
</dbReference>
<dbReference type="PRO" id="PR:P27605"/>
<dbReference type="Proteomes" id="UP000002494">
    <property type="component" value="Chromosome X"/>
</dbReference>
<dbReference type="Bgee" id="ENSRNOG00000031367">
    <property type="expression patterns" value="Expressed in heart and 19 other cell types or tissues"/>
</dbReference>
<dbReference type="GO" id="GO:0005737">
    <property type="term" value="C:cytoplasm"/>
    <property type="evidence" value="ECO:0000266"/>
    <property type="project" value="RGD"/>
</dbReference>
<dbReference type="GO" id="GO:0005829">
    <property type="term" value="C:cytosol"/>
    <property type="evidence" value="ECO:0000266"/>
    <property type="project" value="RGD"/>
</dbReference>
<dbReference type="GO" id="GO:0052657">
    <property type="term" value="F:guanine phosphoribosyltransferase activity"/>
    <property type="evidence" value="ECO:0000250"/>
    <property type="project" value="UniProtKB"/>
</dbReference>
<dbReference type="GO" id="GO:0004422">
    <property type="term" value="F:hypoxanthine phosphoribosyltransferase activity"/>
    <property type="evidence" value="ECO:0000314"/>
    <property type="project" value="RGD"/>
</dbReference>
<dbReference type="GO" id="GO:0042802">
    <property type="term" value="F:identical protein binding"/>
    <property type="evidence" value="ECO:0000266"/>
    <property type="project" value="RGD"/>
</dbReference>
<dbReference type="GO" id="GO:0000287">
    <property type="term" value="F:magnesium ion binding"/>
    <property type="evidence" value="ECO:0000266"/>
    <property type="project" value="RGD"/>
</dbReference>
<dbReference type="GO" id="GO:0000166">
    <property type="term" value="F:nucleotide binding"/>
    <property type="evidence" value="ECO:0007669"/>
    <property type="project" value="UniProtKB-KW"/>
</dbReference>
<dbReference type="GO" id="GO:0046083">
    <property type="term" value="P:adenine metabolic process"/>
    <property type="evidence" value="ECO:0000266"/>
    <property type="project" value="RGD"/>
</dbReference>
<dbReference type="GO" id="GO:0044209">
    <property type="term" value="P:AMP salvage"/>
    <property type="evidence" value="ECO:0000266"/>
    <property type="project" value="RGD"/>
</dbReference>
<dbReference type="GO" id="GO:0032869">
    <property type="term" value="P:cellular response to insulin stimulus"/>
    <property type="evidence" value="ECO:0000270"/>
    <property type="project" value="RGD"/>
</dbReference>
<dbReference type="GO" id="GO:0021954">
    <property type="term" value="P:central nervous system neuron development"/>
    <property type="evidence" value="ECO:0000266"/>
    <property type="project" value="RGD"/>
</dbReference>
<dbReference type="GO" id="GO:0021895">
    <property type="term" value="P:cerebral cortex neuron differentiation"/>
    <property type="evidence" value="ECO:0000266"/>
    <property type="project" value="RGD"/>
</dbReference>
<dbReference type="GO" id="GO:0048813">
    <property type="term" value="P:dendrite morphogenesis"/>
    <property type="evidence" value="ECO:0000266"/>
    <property type="project" value="RGD"/>
</dbReference>
<dbReference type="GO" id="GO:0042417">
    <property type="term" value="P:dopamine metabolic process"/>
    <property type="evidence" value="ECO:0000266"/>
    <property type="project" value="RGD"/>
</dbReference>
<dbReference type="GO" id="GO:0071542">
    <property type="term" value="P:dopaminergic neuron differentiation"/>
    <property type="evidence" value="ECO:0000266"/>
    <property type="project" value="RGD"/>
</dbReference>
<dbReference type="GO" id="GO:0046038">
    <property type="term" value="P:GMP catabolic process"/>
    <property type="evidence" value="ECO:0000250"/>
    <property type="project" value="UniProtKB"/>
</dbReference>
<dbReference type="GO" id="GO:0032263">
    <property type="term" value="P:GMP salvage"/>
    <property type="evidence" value="ECO:0000266"/>
    <property type="project" value="RGD"/>
</dbReference>
<dbReference type="GO" id="GO:0007625">
    <property type="term" value="P:grooming behavior"/>
    <property type="evidence" value="ECO:0000266"/>
    <property type="project" value="RGD"/>
</dbReference>
<dbReference type="GO" id="GO:0006178">
    <property type="term" value="P:guanine salvage"/>
    <property type="evidence" value="ECO:0000250"/>
    <property type="project" value="UniProtKB"/>
</dbReference>
<dbReference type="GO" id="GO:0046100">
    <property type="term" value="P:hypoxanthine metabolic process"/>
    <property type="evidence" value="ECO:0000314"/>
    <property type="project" value="RGD"/>
</dbReference>
<dbReference type="GO" id="GO:0043103">
    <property type="term" value="P:hypoxanthine salvage"/>
    <property type="evidence" value="ECO:0000250"/>
    <property type="project" value="UniProtKB"/>
</dbReference>
<dbReference type="GO" id="GO:0046040">
    <property type="term" value="P:IMP metabolic process"/>
    <property type="evidence" value="ECO:0000250"/>
    <property type="project" value="UniProtKB"/>
</dbReference>
<dbReference type="GO" id="GO:0032264">
    <property type="term" value="P:IMP salvage"/>
    <property type="evidence" value="ECO:0000266"/>
    <property type="project" value="RGD"/>
</dbReference>
<dbReference type="GO" id="GO:0007626">
    <property type="term" value="P:locomotory behavior"/>
    <property type="evidence" value="ECO:0000266"/>
    <property type="project" value="RGD"/>
</dbReference>
<dbReference type="GO" id="GO:0046651">
    <property type="term" value="P:lymphocyte proliferation"/>
    <property type="evidence" value="ECO:0000266"/>
    <property type="project" value="RGD"/>
</dbReference>
<dbReference type="GO" id="GO:0045964">
    <property type="term" value="P:positive regulation of dopamine metabolic process"/>
    <property type="evidence" value="ECO:0000266"/>
    <property type="project" value="RGD"/>
</dbReference>
<dbReference type="GO" id="GO:0051289">
    <property type="term" value="P:protein homotetramerization"/>
    <property type="evidence" value="ECO:0000266"/>
    <property type="project" value="RGD"/>
</dbReference>
<dbReference type="GO" id="GO:0006164">
    <property type="term" value="P:purine nucleotide biosynthetic process"/>
    <property type="evidence" value="ECO:0000266"/>
    <property type="project" value="RGD"/>
</dbReference>
<dbReference type="GO" id="GO:0006166">
    <property type="term" value="P:purine ribonucleoside salvage"/>
    <property type="evidence" value="ECO:0000266"/>
    <property type="project" value="RGD"/>
</dbReference>
<dbReference type="GO" id="GO:0001975">
    <property type="term" value="P:response to amphetamine"/>
    <property type="evidence" value="ECO:0000266"/>
    <property type="project" value="RGD"/>
</dbReference>
<dbReference type="GO" id="GO:0007283">
    <property type="term" value="P:spermatogenesis"/>
    <property type="evidence" value="ECO:0000270"/>
    <property type="project" value="RGD"/>
</dbReference>
<dbReference type="GO" id="GO:0021756">
    <property type="term" value="P:striatum development"/>
    <property type="evidence" value="ECO:0000266"/>
    <property type="project" value="RGD"/>
</dbReference>
<dbReference type="GO" id="GO:0001913">
    <property type="term" value="P:T cell mediated cytotoxicity"/>
    <property type="evidence" value="ECO:0000266"/>
    <property type="project" value="RGD"/>
</dbReference>
<dbReference type="CDD" id="cd06223">
    <property type="entry name" value="PRTases_typeI"/>
    <property type="match status" value="1"/>
</dbReference>
<dbReference type="FunFam" id="3.40.50.2020:FF:000019">
    <property type="entry name" value="Hypoxanthine phosphoribosyltransferase"/>
    <property type="match status" value="1"/>
</dbReference>
<dbReference type="Gene3D" id="3.40.50.2020">
    <property type="match status" value="1"/>
</dbReference>
<dbReference type="InterPro" id="IPR050408">
    <property type="entry name" value="HGPRT"/>
</dbReference>
<dbReference type="InterPro" id="IPR005904">
    <property type="entry name" value="Hxn_phspho_trans"/>
</dbReference>
<dbReference type="InterPro" id="IPR000836">
    <property type="entry name" value="PRibTrfase_dom"/>
</dbReference>
<dbReference type="InterPro" id="IPR029057">
    <property type="entry name" value="PRTase-like"/>
</dbReference>
<dbReference type="NCBIfam" id="TIGR01203">
    <property type="entry name" value="HGPRTase"/>
    <property type="match status" value="1"/>
</dbReference>
<dbReference type="PANTHER" id="PTHR43340">
    <property type="entry name" value="HYPOXANTHINE-GUANINE PHOSPHORIBOSYLTRANSFERASE"/>
    <property type="match status" value="1"/>
</dbReference>
<dbReference type="PANTHER" id="PTHR43340:SF6">
    <property type="entry name" value="HYPOXANTHINE-GUANINE PHOSPHORIBOSYLTRANSFERASE"/>
    <property type="match status" value="1"/>
</dbReference>
<dbReference type="Pfam" id="PF00156">
    <property type="entry name" value="Pribosyltran"/>
    <property type="match status" value="1"/>
</dbReference>
<dbReference type="SUPFAM" id="SSF53271">
    <property type="entry name" value="PRTase-like"/>
    <property type="match status" value="1"/>
</dbReference>
<dbReference type="PROSITE" id="PS00103">
    <property type="entry name" value="PUR_PYR_PR_TRANSFER"/>
    <property type="match status" value="1"/>
</dbReference>